<protein>
    <recommendedName>
        <fullName evidence="1">Protein SprT</fullName>
    </recommendedName>
</protein>
<keyword id="KW-0963">Cytoplasm</keyword>
<keyword id="KW-0479">Metal-binding</keyword>
<keyword id="KW-0862">Zinc</keyword>
<organism>
    <name type="scientific">Shigella flexneri serotype 5b (strain 8401)</name>
    <dbReference type="NCBI Taxonomy" id="373384"/>
    <lineage>
        <taxon>Bacteria</taxon>
        <taxon>Pseudomonadati</taxon>
        <taxon>Pseudomonadota</taxon>
        <taxon>Gammaproteobacteria</taxon>
        <taxon>Enterobacterales</taxon>
        <taxon>Enterobacteriaceae</taxon>
        <taxon>Shigella</taxon>
    </lineage>
</organism>
<gene>
    <name evidence="1" type="primary">sprT</name>
    <name type="ordered locus">SFV_2998</name>
</gene>
<sequence length="165" mass="19335">MKTSRLPIAIQQAVMRRLREKLAQANLKLGRNYPEPKLSYTQRGTSAGTAWLESYEIRLNPVLLLENSEAFIEEVVPHELAHLLVWKHFGRVAPHGKEWKWMMESVLGVPARRTHQFELQSVRRNTFPYRCKCQEHQLTVRRHNRVVRGEAIYRCVHCGEQLVAK</sequence>
<dbReference type="EMBL" id="CP000266">
    <property type="protein sequence ID" value="ABF05067.1"/>
    <property type="molecule type" value="Genomic_DNA"/>
</dbReference>
<dbReference type="RefSeq" id="WP_005051770.1">
    <property type="nucleotide sequence ID" value="NC_008258.1"/>
</dbReference>
<dbReference type="KEGG" id="sfv:SFV_2998"/>
<dbReference type="HOGENOM" id="CLU_113336_0_1_6"/>
<dbReference type="Proteomes" id="UP000000659">
    <property type="component" value="Chromosome"/>
</dbReference>
<dbReference type="GO" id="GO:0005737">
    <property type="term" value="C:cytoplasm"/>
    <property type="evidence" value="ECO:0007669"/>
    <property type="project" value="UniProtKB-SubCell"/>
</dbReference>
<dbReference type="GO" id="GO:0008270">
    <property type="term" value="F:zinc ion binding"/>
    <property type="evidence" value="ECO:0007669"/>
    <property type="project" value="UniProtKB-UniRule"/>
</dbReference>
<dbReference type="GO" id="GO:0006950">
    <property type="term" value="P:response to stress"/>
    <property type="evidence" value="ECO:0007669"/>
    <property type="project" value="UniProtKB-ARBA"/>
</dbReference>
<dbReference type="Gene3D" id="3.30.2010.10">
    <property type="entry name" value="Metalloproteases ('zincins'), catalytic domain"/>
    <property type="match status" value="1"/>
</dbReference>
<dbReference type="HAMAP" id="MF_00746">
    <property type="entry name" value="SprT"/>
    <property type="match status" value="1"/>
</dbReference>
<dbReference type="InterPro" id="IPR006640">
    <property type="entry name" value="SprT-like_domain"/>
</dbReference>
<dbReference type="InterPro" id="IPR035240">
    <property type="entry name" value="SprT_Zn_ribbon"/>
</dbReference>
<dbReference type="InterPro" id="IPR023483">
    <property type="entry name" value="Uncharacterised_SprT"/>
</dbReference>
<dbReference type="NCBIfam" id="NF003421">
    <property type="entry name" value="PRK04860.1"/>
    <property type="match status" value="1"/>
</dbReference>
<dbReference type="PANTHER" id="PTHR38773">
    <property type="entry name" value="PROTEIN SPRT"/>
    <property type="match status" value="1"/>
</dbReference>
<dbReference type="PANTHER" id="PTHR38773:SF1">
    <property type="entry name" value="PROTEIN SPRT"/>
    <property type="match status" value="1"/>
</dbReference>
<dbReference type="Pfam" id="PF10263">
    <property type="entry name" value="SprT-like"/>
    <property type="match status" value="1"/>
</dbReference>
<dbReference type="Pfam" id="PF17283">
    <property type="entry name" value="Zn_ribbon_SprT"/>
    <property type="match status" value="1"/>
</dbReference>
<dbReference type="SMART" id="SM00731">
    <property type="entry name" value="SprT"/>
    <property type="match status" value="1"/>
</dbReference>
<dbReference type="PROSITE" id="PS00142">
    <property type="entry name" value="ZINC_PROTEASE"/>
    <property type="match status" value="1"/>
</dbReference>
<reference key="1">
    <citation type="journal article" date="2006" name="BMC Genomics">
        <title>Complete genome sequence of Shigella flexneri 5b and comparison with Shigella flexneri 2a.</title>
        <authorList>
            <person name="Nie H."/>
            <person name="Yang F."/>
            <person name="Zhang X."/>
            <person name="Yang J."/>
            <person name="Chen L."/>
            <person name="Wang J."/>
            <person name="Xiong Z."/>
            <person name="Peng J."/>
            <person name="Sun L."/>
            <person name="Dong J."/>
            <person name="Xue Y."/>
            <person name="Xu X."/>
            <person name="Chen S."/>
            <person name="Yao Z."/>
            <person name="Shen Y."/>
            <person name="Jin Q."/>
        </authorList>
    </citation>
    <scope>NUCLEOTIDE SEQUENCE [LARGE SCALE GENOMIC DNA]</scope>
    <source>
        <strain>8401</strain>
    </source>
</reference>
<proteinExistence type="inferred from homology"/>
<accession>Q0T0U8</accession>
<evidence type="ECO:0000255" key="1">
    <source>
        <dbReference type="HAMAP-Rule" id="MF_00746"/>
    </source>
</evidence>
<feature type="chain" id="PRO_1000046542" description="Protein SprT">
    <location>
        <begin position="1"/>
        <end position="165"/>
    </location>
</feature>
<feature type="domain" description="SprT-like" evidence="1">
    <location>
        <begin position="20"/>
        <end position="163"/>
    </location>
</feature>
<feature type="active site" evidence="1">
    <location>
        <position position="79"/>
    </location>
</feature>
<feature type="binding site" evidence="1">
    <location>
        <position position="78"/>
    </location>
    <ligand>
        <name>Zn(2+)</name>
        <dbReference type="ChEBI" id="CHEBI:29105"/>
    </ligand>
</feature>
<feature type="binding site" evidence="1">
    <location>
        <position position="82"/>
    </location>
    <ligand>
        <name>Zn(2+)</name>
        <dbReference type="ChEBI" id="CHEBI:29105"/>
    </ligand>
</feature>
<comment type="cofactor">
    <cofactor evidence="1">
        <name>Zn(2+)</name>
        <dbReference type="ChEBI" id="CHEBI:29105"/>
    </cofactor>
    <text evidence="1">Binds 1 zinc ion.</text>
</comment>
<comment type="subcellular location">
    <subcellularLocation>
        <location evidence="1">Cytoplasm</location>
    </subcellularLocation>
</comment>
<comment type="similarity">
    <text evidence="1">Belongs to the SprT family.</text>
</comment>
<name>SPRT_SHIF8</name>